<evidence type="ECO:0000255" key="1">
    <source>
        <dbReference type="HAMAP-Rule" id="MF_01345"/>
    </source>
</evidence>
<evidence type="ECO:0000305" key="2"/>
<keyword id="KW-0687">Ribonucleoprotein</keyword>
<keyword id="KW-0689">Ribosomal protein</keyword>
<keyword id="KW-0694">RNA-binding</keyword>
<keyword id="KW-0699">rRNA-binding</keyword>
<sequence>MTDQIRTLQGRVVSDKMEKSMVVAIERVVKHPIYGKFIRRTTKLHVHDENNECGIGDVVEIRECRPLSKTKSWTLVRVVEKAIL</sequence>
<feature type="chain" id="PRO_1000055048" description="Small ribosomal subunit protein uS17">
    <location>
        <begin position="1"/>
        <end position="84"/>
    </location>
</feature>
<gene>
    <name evidence="1" type="primary">rpsQ</name>
    <name type="ordered locus">YPN_3850</name>
    <name type="ORF">YP516_4373</name>
</gene>
<comment type="function">
    <text evidence="1">One of the primary rRNA binding proteins, it binds specifically to the 5'-end of 16S ribosomal RNA.</text>
</comment>
<comment type="subunit">
    <text evidence="1">Part of the 30S ribosomal subunit.</text>
</comment>
<comment type="similarity">
    <text evidence="1">Belongs to the universal ribosomal protein uS17 family.</text>
</comment>
<accession>Q1CCV3</accession>
<accession>D1Q2L2</accession>
<proteinExistence type="inferred from homology"/>
<protein>
    <recommendedName>
        <fullName evidence="1">Small ribosomal subunit protein uS17</fullName>
    </recommendedName>
    <alternativeName>
        <fullName evidence="2">30S ribosomal protein S17</fullName>
    </alternativeName>
</protein>
<dbReference type="EMBL" id="CP000305">
    <property type="protein sequence ID" value="ABG20177.1"/>
    <property type="molecule type" value="Genomic_DNA"/>
</dbReference>
<dbReference type="EMBL" id="ACNQ01000019">
    <property type="protein sequence ID" value="EEO74765.1"/>
    <property type="molecule type" value="Genomic_DNA"/>
</dbReference>
<dbReference type="RefSeq" id="WP_002228135.1">
    <property type="nucleotide sequence ID" value="NZ_ACNQ01000019.1"/>
</dbReference>
<dbReference type="SMR" id="Q1CCV3"/>
<dbReference type="GeneID" id="97454240"/>
<dbReference type="KEGG" id="ypn:YPN_3850"/>
<dbReference type="HOGENOM" id="CLU_073626_1_1_6"/>
<dbReference type="Proteomes" id="UP000008936">
    <property type="component" value="Chromosome"/>
</dbReference>
<dbReference type="GO" id="GO:0022627">
    <property type="term" value="C:cytosolic small ribosomal subunit"/>
    <property type="evidence" value="ECO:0007669"/>
    <property type="project" value="TreeGrafter"/>
</dbReference>
<dbReference type="GO" id="GO:0019843">
    <property type="term" value="F:rRNA binding"/>
    <property type="evidence" value="ECO:0007669"/>
    <property type="project" value="UniProtKB-UniRule"/>
</dbReference>
<dbReference type="GO" id="GO:0003735">
    <property type="term" value="F:structural constituent of ribosome"/>
    <property type="evidence" value="ECO:0007669"/>
    <property type="project" value="InterPro"/>
</dbReference>
<dbReference type="GO" id="GO:0006412">
    <property type="term" value="P:translation"/>
    <property type="evidence" value="ECO:0007669"/>
    <property type="project" value="UniProtKB-UniRule"/>
</dbReference>
<dbReference type="CDD" id="cd00364">
    <property type="entry name" value="Ribosomal_uS17"/>
    <property type="match status" value="1"/>
</dbReference>
<dbReference type="FunFam" id="2.40.50.140:FF:000014">
    <property type="entry name" value="30S ribosomal protein S17"/>
    <property type="match status" value="1"/>
</dbReference>
<dbReference type="Gene3D" id="2.40.50.140">
    <property type="entry name" value="Nucleic acid-binding proteins"/>
    <property type="match status" value="1"/>
</dbReference>
<dbReference type="HAMAP" id="MF_01345_B">
    <property type="entry name" value="Ribosomal_uS17_B"/>
    <property type="match status" value="1"/>
</dbReference>
<dbReference type="InterPro" id="IPR012340">
    <property type="entry name" value="NA-bd_OB-fold"/>
</dbReference>
<dbReference type="InterPro" id="IPR000266">
    <property type="entry name" value="Ribosomal_uS17"/>
</dbReference>
<dbReference type="InterPro" id="IPR019984">
    <property type="entry name" value="Ribosomal_uS17_bact/chlr"/>
</dbReference>
<dbReference type="InterPro" id="IPR019979">
    <property type="entry name" value="Ribosomal_uS17_CS"/>
</dbReference>
<dbReference type="NCBIfam" id="NF004123">
    <property type="entry name" value="PRK05610.1"/>
    <property type="match status" value="1"/>
</dbReference>
<dbReference type="NCBIfam" id="TIGR03635">
    <property type="entry name" value="uS17_bact"/>
    <property type="match status" value="1"/>
</dbReference>
<dbReference type="PANTHER" id="PTHR10744">
    <property type="entry name" value="40S RIBOSOMAL PROTEIN S11 FAMILY MEMBER"/>
    <property type="match status" value="1"/>
</dbReference>
<dbReference type="PANTHER" id="PTHR10744:SF1">
    <property type="entry name" value="SMALL RIBOSOMAL SUBUNIT PROTEIN US17M"/>
    <property type="match status" value="1"/>
</dbReference>
<dbReference type="Pfam" id="PF00366">
    <property type="entry name" value="Ribosomal_S17"/>
    <property type="match status" value="1"/>
</dbReference>
<dbReference type="PRINTS" id="PR00973">
    <property type="entry name" value="RIBOSOMALS17"/>
</dbReference>
<dbReference type="SUPFAM" id="SSF50249">
    <property type="entry name" value="Nucleic acid-binding proteins"/>
    <property type="match status" value="1"/>
</dbReference>
<dbReference type="PROSITE" id="PS00056">
    <property type="entry name" value="RIBOSOMAL_S17"/>
    <property type="match status" value="1"/>
</dbReference>
<name>RS17_YERPN</name>
<organism>
    <name type="scientific">Yersinia pestis bv. Antiqua (strain Nepal516)</name>
    <dbReference type="NCBI Taxonomy" id="377628"/>
    <lineage>
        <taxon>Bacteria</taxon>
        <taxon>Pseudomonadati</taxon>
        <taxon>Pseudomonadota</taxon>
        <taxon>Gammaproteobacteria</taxon>
        <taxon>Enterobacterales</taxon>
        <taxon>Yersiniaceae</taxon>
        <taxon>Yersinia</taxon>
    </lineage>
</organism>
<reference key="1">
    <citation type="journal article" date="2006" name="J. Bacteriol.">
        <title>Complete genome sequence of Yersinia pestis strains Antiqua and Nepal516: evidence of gene reduction in an emerging pathogen.</title>
        <authorList>
            <person name="Chain P.S.G."/>
            <person name="Hu P."/>
            <person name="Malfatti S.A."/>
            <person name="Radnedge L."/>
            <person name="Larimer F."/>
            <person name="Vergez L.M."/>
            <person name="Worsham P."/>
            <person name="Chu M.C."/>
            <person name="Andersen G.L."/>
        </authorList>
    </citation>
    <scope>NUCLEOTIDE SEQUENCE [LARGE SCALE GENOMIC DNA]</scope>
    <source>
        <strain>Nepal516</strain>
    </source>
</reference>
<reference key="2">
    <citation type="submission" date="2009-04" db="EMBL/GenBank/DDBJ databases">
        <title>Yersinia pestis Nepal516A whole genome shotgun sequencing project.</title>
        <authorList>
            <person name="Plunkett G. III"/>
            <person name="Anderson B.D."/>
            <person name="Baumler D.J."/>
            <person name="Burland V."/>
            <person name="Cabot E.L."/>
            <person name="Glasner J.D."/>
            <person name="Mau B."/>
            <person name="Neeno-Eckwall E."/>
            <person name="Perna N.T."/>
            <person name="Munk A.C."/>
            <person name="Tapia R."/>
            <person name="Green L.D."/>
            <person name="Rogers Y.C."/>
            <person name="Detter J.C."/>
            <person name="Bruce D.C."/>
            <person name="Brettin T.S."/>
        </authorList>
    </citation>
    <scope>NUCLEOTIDE SEQUENCE [LARGE SCALE GENOMIC DNA]</scope>
    <source>
        <strain>Nepal516</strain>
    </source>
</reference>